<sequence>MIRKIPSFIKIYESLIKIPTISSLNNKLDQSNKVLIDLLSNYFSELNFLINIKNIPNTNKFNMLASFGDGKGGILFSGHTDTVDFDEHLWTKDPFKLTEKNNKLYGLGTVDMKGFFAFILDALCSINIKSIKKPIYILATANEETDMSGARYFIQSSSIKPDFIIIGEPTSLKLVKAHKGHVSYSIDVVGNTGHSSNPANGINSIEIMHLVIKKLLKLKIYLREKYFHKDFSIGYPTMNFSSINGGNAINRICALCNLKFEIRPTPGLTLTQIEILIQEMLQAIFKKWPNRIFLKNLFFSVPPYEFPKEKKIIKKIENSCQLKPTTANYCTEAPFLGKIGPTLILGPGSIQQAHNADEYLDCSFIKPTKKIIRKLIKNFCY</sequence>
<dbReference type="EC" id="3.5.1.16" evidence="1"/>
<dbReference type="EMBL" id="AE013218">
    <property type="protein sequence ID" value="AAM67615.1"/>
    <property type="molecule type" value="Genomic_DNA"/>
</dbReference>
<dbReference type="RefSeq" id="WP_011053581.1">
    <property type="nucleotide sequence ID" value="NC_004061.1"/>
</dbReference>
<dbReference type="SMR" id="P59085"/>
<dbReference type="STRING" id="198804.BUsg_044"/>
<dbReference type="GeneID" id="93003511"/>
<dbReference type="KEGG" id="bas:BUsg_044"/>
<dbReference type="eggNOG" id="COG0624">
    <property type="taxonomic scope" value="Bacteria"/>
</dbReference>
<dbReference type="HOGENOM" id="CLU_021802_2_4_6"/>
<dbReference type="UniPathway" id="UPA00068">
    <property type="reaction ID" value="UER00110"/>
</dbReference>
<dbReference type="Proteomes" id="UP000000416">
    <property type="component" value="Chromosome"/>
</dbReference>
<dbReference type="GO" id="GO:0005737">
    <property type="term" value="C:cytoplasm"/>
    <property type="evidence" value="ECO:0007669"/>
    <property type="project" value="UniProtKB-SubCell"/>
</dbReference>
<dbReference type="GO" id="GO:0008777">
    <property type="term" value="F:acetylornithine deacetylase activity"/>
    <property type="evidence" value="ECO:0007669"/>
    <property type="project" value="UniProtKB-UniRule"/>
</dbReference>
<dbReference type="GO" id="GO:0008270">
    <property type="term" value="F:zinc ion binding"/>
    <property type="evidence" value="ECO:0007669"/>
    <property type="project" value="UniProtKB-UniRule"/>
</dbReference>
<dbReference type="GO" id="GO:0006526">
    <property type="term" value="P:L-arginine biosynthetic process"/>
    <property type="evidence" value="ECO:0007669"/>
    <property type="project" value="UniProtKB-UniRule"/>
</dbReference>
<dbReference type="CDD" id="cd03894">
    <property type="entry name" value="M20_ArgE"/>
    <property type="match status" value="1"/>
</dbReference>
<dbReference type="FunFam" id="3.30.70.360:FF:000003">
    <property type="entry name" value="Acetylornithine deacetylase"/>
    <property type="match status" value="1"/>
</dbReference>
<dbReference type="Gene3D" id="3.30.70.360">
    <property type="match status" value="1"/>
</dbReference>
<dbReference type="Gene3D" id="3.40.630.10">
    <property type="entry name" value="Zn peptidases"/>
    <property type="match status" value="1"/>
</dbReference>
<dbReference type="HAMAP" id="MF_01108">
    <property type="entry name" value="ArgE"/>
    <property type="match status" value="1"/>
</dbReference>
<dbReference type="InterPro" id="IPR010169">
    <property type="entry name" value="AcOrn-deacetyl"/>
</dbReference>
<dbReference type="InterPro" id="IPR001261">
    <property type="entry name" value="ArgE/DapE_CS"/>
</dbReference>
<dbReference type="InterPro" id="IPR036264">
    <property type="entry name" value="Bact_exopeptidase_dim_dom"/>
</dbReference>
<dbReference type="InterPro" id="IPR002933">
    <property type="entry name" value="Peptidase_M20"/>
</dbReference>
<dbReference type="InterPro" id="IPR011650">
    <property type="entry name" value="Peptidase_M20_dimer"/>
</dbReference>
<dbReference type="InterPro" id="IPR050072">
    <property type="entry name" value="Peptidase_M20A"/>
</dbReference>
<dbReference type="NCBIfam" id="TIGR01892">
    <property type="entry name" value="AcOrn-deacetyl"/>
    <property type="match status" value="1"/>
</dbReference>
<dbReference type="NCBIfam" id="NF003474">
    <property type="entry name" value="PRK05111.1"/>
    <property type="match status" value="1"/>
</dbReference>
<dbReference type="PANTHER" id="PTHR43808">
    <property type="entry name" value="ACETYLORNITHINE DEACETYLASE"/>
    <property type="match status" value="1"/>
</dbReference>
<dbReference type="PANTHER" id="PTHR43808:SF1">
    <property type="entry name" value="ACETYLORNITHINE DEACETYLASE"/>
    <property type="match status" value="1"/>
</dbReference>
<dbReference type="Pfam" id="PF07687">
    <property type="entry name" value="M20_dimer"/>
    <property type="match status" value="1"/>
</dbReference>
<dbReference type="Pfam" id="PF01546">
    <property type="entry name" value="Peptidase_M20"/>
    <property type="match status" value="1"/>
</dbReference>
<dbReference type="SUPFAM" id="SSF55031">
    <property type="entry name" value="Bacterial exopeptidase dimerisation domain"/>
    <property type="match status" value="1"/>
</dbReference>
<dbReference type="SUPFAM" id="SSF53187">
    <property type="entry name" value="Zn-dependent exopeptidases"/>
    <property type="match status" value="1"/>
</dbReference>
<dbReference type="PROSITE" id="PS00758">
    <property type="entry name" value="ARGE_DAPE_CPG2_1"/>
    <property type="match status" value="1"/>
</dbReference>
<dbReference type="PROSITE" id="PS00759">
    <property type="entry name" value="ARGE_DAPE_CPG2_2"/>
    <property type="match status" value="1"/>
</dbReference>
<protein>
    <recommendedName>
        <fullName evidence="1">Acetylornithine deacetylase</fullName>
        <shortName evidence="1">AO</shortName>
        <shortName evidence="1">Acetylornithinase</shortName>
        <ecNumber evidence="1">3.5.1.16</ecNumber>
    </recommendedName>
    <alternativeName>
        <fullName evidence="1">N-acetylornithinase</fullName>
        <shortName evidence="1">NAO</shortName>
    </alternativeName>
</protein>
<proteinExistence type="inferred from homology"/>
<evidence type="ECO:0000255" key="1">
    <source>
        <dbReference type="HAMAP-Rule" id="MF_01108"/>
    </source>
</evidence>
<evidence type="ECO:0000305" key="2"/>
<gene>
    <name evidence="1" type="primary">argE</name>
    <name type="ordered locus">BUsg_044</name>
</gene>
<accession>P59085</accession>
<feature type="chain" id="PRO_0000185239" description="Acetylornithine deacetylase">
    <location>
        <begin position="1"/>
        <end position="381"/>
    </location>
</feature>
<feature type="active site" evidence="1">
    <location>
        <position position="81"/>
    </location>
</feature>
<feature type="active site" evidence="1">
    <location>
        <position position="143"/>
    </location>
</feature>
<feature type="binding site" evidence="1">
    <location>
        <position position="79"/>
    </location>
    <ligand>
        <name>Zn(2+)</name>
        <dbReference type="ChEBI" id="CHEBI:29105"/>
        <label>1</label>
    </ligand>
</feature>
<feature type="binding site" evidence="1">
    <location>
        <position position="111"/>
    </location>
    <ligand>
        <name>Zn(2+)</name>
        <dbReference type="ChEBI" id="CHEBI:29105"/>
        <label>1</label>
    </ligand>
</feature>
<feature type="binding site" evidence="1">
    <location>
        <position position="111"/>
    </location>
    <ligand>
        <name>Zn(2+)</name>
        <dbReference type="ChEBI" id="CHEBI:29105"/>
        <label>2</label>
    </ligand>
</feature>
<feature type="binding site" evidence="1">
    <location>
        <position position="144"/>
    </location>
    <ligand>
        <name>Zn(2+)</name>
        <dbReference type="ChEBI" id="CHEBI:29105"/>
        <label>2</label>
    </ligand>
</feature>
<feature type="binding site" evidence="1">
    <location>
        <position position="168"/>
    </location>
    <ligand>
        <name>Zn(2+)</name>
        <dbReference type="ChEBI" id="CHEBI:29105"/>
        <label>1</label>
    </ligand>
</feature>
<feature type="binding site" evidence="1">
    <location>
        <position position="354"/>
    </location>
    <ligand>
        <name>Zn(2+)</name>
        <dbReference type="ChEBI" id="CHEBI:29105"/>
        <label>2</label>
    </ligand>
</feature>
<comment type="function">
    <text evidence="1">Catalyzes the hydrolysis of the amide bond of N(2)-acetylated L-amino acids. Cleaves the acetyl group from N-acetyl-L-ornithine to form L-ornithine, an intermediate in L-arginine biosynthesis pathway, and a branchpoint in the synthesis of polyamines.</text>
</comment>
<comment type="catalytic activity">
    <reaction evidence="1">
        <text>N(2)-acetyl-L-ornithine + H2O = L-ornithine + acetate</text>
        <dbReference type="Rhea" id="RHEA:15941"/>
        <dbReference type="ChEBI" id="CHEBI:15377"/>
        <dbReference type="ChEBI" id="CHEBI:30089"/>
        <dbReference type="ChEBI" id="CHEBI:46911"/>
        <dbReference type="ChEBI" id="CHEBI:57805"/>
        <dbReference type="EC" id="3.5.1.16"/>
    </reaction>
</comment>
<comment type="cofactor">
    <cofactor evidence="1">
        <name>Zn(2+)</name>
        <dbReference type="ChEBI" id="CHEBI:29105"/>
    </cofactor>
    <cofactor evidence="1">
        <name>Co(2+)</name>
        <dbReference type="ChEBI" id="CHEBI:48828"/>
    </cofactor>
    <text evidence="1">Binds 2 Zn(2+) or Co(2+) ions per subunit.</text>
</comment>
<comment type="cofactor">
    <cofactor evidence="1">
        <name>glutathione</name>
        <dbReference type="ChEBI" id="CHEBI:57925"/>
    </cofactor>
</comment>
<comment type="pathway">
    <text evidence="1">Amino-acid biosynthesis; L-arginine biosynthesis; L-ornithine from N(2)-acetyl-L-ornithine (linear): step 1/1.</text>
</comment>
<comment type="subunit">
    <text evidence="1">Homodimer.</text>
</comment>
<comment type="subcellular location">
    <subcellularLocation>
        <location evidence="1">Cytoplasm</location>
    </subcellularLocation>
</comment>
<comment type="similarity">
    <text evidence="1 2">Belongs to the peptidase M20A family. ArgE subfamily.</text>
</comment>
<reference key="1">
    <citation type="journal article" date="2002" name="Science">
        <title>50 million years of genomic stasis in endosymbiotic bacteria.</title>
        <authorList>
            <person name="Tamas I."/>
            <person name="Klasson L."/>
            <person name="Canbaeck B."/>
            <person name="Naeslund A.K."/>
            <person name="Eriksson A.-S."/>
            <person name="Wernegreen J.J."/>
            <person name="Sandstroem J.P."/>
            <person name="Moran N.A."/>
            <person name="Andersson S.G.E."/>
        </authorList>
    </citation>
    <scope>NUCLEOTIDE SEQUENCE [LARGE SCALE GENOMIC DNA]</scope>
    <source>
        <strain>Sg</strain>
    </source>
</reference>
<keyword id="KW-0028">Amino-acid biosynthesis</keyword>
<keyword id="KW-0055">Arginine biosynthesis</keyword>
<keyword id="KW-0170">Cobalt</keyword>
<keyword id="KW-0963">Cytoplasm</keyword>
<keyword id="KW-0378">Hydrolase</keyword>
<keyword id="KW-0479">Metal-binding</keyword>
<keyword id="KW-0862">Zinc</keyword>
<name>ARGE_BUCAP</name>
<organism>
    <name type="scientific">Buchnera aphidicola subsp. Schizaphis graminum (strain Sg)</name>
    <dbReference type="NCBI Taxonomy" id="198804"/>
    <lineage>
        <taxon>Bacteria</taxon>
        <taxon>Pseudomonadati</taxon>
        <taxon>Pseudomonadota</taxon>
        <taxon>Gammaproteobacteria</taxon>
        <taxon>Enterobacterales</taxon>
        <taxon>Erwiniaceae</taxon>
        <taxon>Buchnera</taxon>
    </lineage>
</organism>